<evidence type="ECO:0000250" key="1">
    <source>
        <dbReference type="UniProtKB" id="Q1HAQ0"/>
    </source>
</evidence>
<evidence type="ECO:0000250" key="2">
    <source>
        <dbReference type="UniProtKB" id="Q8NF37"/>
    </source>
</evidence>
<evidence type="ECO:0000255" key="3"/>
<evidence type="ECO:0000255" key="4">
    <source>
        <dbReference type="PROSITE-ProRule" id="PRU00448"/>
    </source>
</evidence>
<evidence type="ECO:0000256" key="5">
    <source>
        <dbReference type="SAM" id="MobiDB-lite"/>
    </source>
</evidence>
<evidence type="ECO:0000269" key="6">
    <source>
    </source>
</evidence>
<evidence type="ECO:0000269" key="7">
    <source>
    </source>
</evidence>
<evidence type="ECO:0000269" key="8">
    <source>
    </source>
</evidence>
<evidence type="ECO:0000269" key="9">
    <source>
    </source>
</evidence>
<evidence type="ECO:0000303" key="10">
    <source>
    </source>
</evidence>
<evidence type="ECO:0000303" key="11">
    <source>
    </source>
</evidence>
<evidence type="ECO:0000305" key="12"/>
<evidence type="ECO:0000305" key="13">
    <source>
    </source>
</evidence>
<evidence type="ECO:0000305" key="14">
    <source>
    </source>
</evidence>
<evidence type="ECO:0000305" key="15">
    <source>
    </source>
</evidence>
<gene>
    <name type="primary">Lpcat1</name>
    <name type="synonym">Aytl2</name>
</gene>
<reference key="1">
    <citation type="journal article" date="2006" name="J. Biol. Chem.">
        <title>Cloning and characterization of mouse lung-type acyl-CoA:lysophosphatidylcholine acyltransferase 1 (LPCAT1): expression in alveolar type II cells and possible involvement in surfactant production.</title>
        <authorList>
            <person name="Nakanishi H."/>
            <person name="Shindou H."/>
            <person name="Hishikawa D."/>
            <person name="Harayama T."/>
            <person name="Ogasawara R."/>
            <person name="Suwabe A."/>
            <person name="Taguchi R."/>
            <person name="Shimizu T."/>
        </authorList>
    </citation>
    <scope>NUCLEOTIDE SEQUENCE [MRNA] (ISOFORM 1)</scope>
    <scope>FUNCTION</scope>
    <scope>CATALYTIC ACTIVITY</scope>
    <scope>BIOPHYSICOCHEMICAL PROPERTIES</scope>
    <scope>SUBCELLULAR LOCATION</scope>
    <scope>TISSUE SPECIFICITY</scope>
    <scope>DI-LYSINE MOTIF</scope>
</reference>
<reference key="2">
    <citation type="journal article" date="2006" name="Proc. Natl. Acad. Sci. U.S.A.">
        <title>Identification and characterization of a lysophosphatidylcholine acyltransferase in alveolar type II cells.</title>
        <authorList>
            <person name="Chen X."/>
            <person name="Hyatt B.A."/>
            <person name="Mucenski M.L."/>
            <person name="Mason R.J."/>
            <person name="Shannon J.M."/>
        </authorList>
    </citation>
    <scope>NUCLEOTIDE SEQUENCE [MRNA]</scope>
    <scope>TISSUE SPECIFICITY</scope>
    <scope>DEVELOPMENTAL STAGE</scope>
</reference>
<reference key="3">
    <citation type="journal article" date="2005" name="Science">
        <title>The transcriptional landscape of the mammalian genome.</title>
        <authorList>
            <person name="Carninci P."/>
            <person name="Kasukawa T."/>
            <person name="Katayama S."/>
            <person name="Gough J."/>
            <person name="Frith M.C."/>
            <person name="Maeda N."/>
            <person name="Oyama R."/>
            <person name="Ravasi T."/>
            <person name="Lenhard B."/>
            <person name="Wells C."/>
            <person name="Kodzius R."/>
            <person name="Shimokawa K."/>
            <person name="Bajic V.B."/>
            <person name="Brenner S.E."/>
            <person name="Batalov S."/>
            <person name="Forrest A.R."/>
            <person name="Zavolan M."/>
            <person name="Davis M.J."/>
            <person name="Wilming L.G."/>
            <person name="Aidinis V."/>
            <person name="Allen J.E."/>
            <person name="Ambesi-Impiombato A."/>
            <person name="Apweiler R."/>
            <person name="Aturaliya R.N."/>
            <person name="Bailey T.L."/>
            <person name="Bansal M."/>
            <person name="Baxter L."/>
            <person name="Beisel K.W."/>
            <person name="Bersano T."/>
            <person name="Bono H."/>
            <person name="Chalk A.M."/>
            <person name="Chiu K.P."/>
            <person name="Choudhary V."/>
            <person name="Christoffels A."/>
            <person name="Clutterbuck D.R."/>
            <person name="Crowe M.L."/>
            <person name="Dalla E."/>
            <person name="Dalrymple B.P."/>
            <person name="de Bono B."/>
            <person name="Della Gatta G."/>
            <person name="di Bernardo D."/>
            <person name="Down T."/>
            <person name="Engstrom P."/>
            <person name="Fagiolini M."/>
            <person name="Faulkner G."/>
            <person name="Fletcher C.F."/>
            <person name="Fukushima T."/>
            <person name="Furuno M."/>
            <person name="Futaki S."/>
            <person name="Gariboldi M."/>
            <person name="Georgii-Hemming P."/>
            <person name="Gingeras T.R."/>
            <person name="Gojobori T."/>
            <person name="Green R.E."/>
            <person name="Gustincich S."/>
            <person name="Harbers M."/>
            <person name="Hayashi Y."/>
            <person name="Hensch T.K."/>
            <person name="Hirokawa N."/>
            <person name="Hill D."/>
            <person name="Huminiecki L."/>
            <person name="Iacono M."/>
            <person name="Ikeo K."/>
            <person name="Iwama A."/>
            <person name="Ishikawa T."/>
            <person name="Jakt M."/>
            <person name="Kanapin A."/>
            <person name="Katoh M."/>
            <person name="Kawasawa Y."/>
            <person name="Kelso J."/>
            <person name="Kitamura H."/>
            <person name="Kitano H."/>
            <person name="Kollias G."/>
            <person name="Krishnan S.P."/>
            <person name="Kruger A."/>
            <person name="Kummerfeld S.K."/>
            <person name="Kurochkin I.V."/>
            <person name="Lareau L.F."/>
            <person name="Lazarevic D."/>
            <person name="Lipovich L."/>
            <person name="Liu J."/>
            <person name="Liuni S."/>
            <person name="McWilliam S."/>
            <person name="Madan Babu M."/>
            <person name="Madera M."/>
            <person name="Marchionni L."/>
            <person name="Matsuda H."/>
            <person name="Matsuzawa S."/>
            <person name="Miki H."/>
            <person name="Mignone F."/>
            <person name="Miyake S."/>
            <person name="Morris K."/>
            <person name="Mottagui-Tabar S."/>
            <person name="Mulder N."/>
            <person name="Nakano N."/>
            <person name="Nakauchi H."/>
            <person name="Ng P."/>
            <person name="Nilsson R."/>
            <person name="Nishiguchi S."/>
            <person name="Nishikawa S."/>
            <person name="Nori F."/>
            <person name="Ohara O."/>
            <person name="Okazaki Y."/>
            <person name="Orlando V."/>
            <person name="Pang K.C."/>
            <person name="Pavan W.J."/>
            <person name="Pavesi G."/>
            <person name="Pesole G."/>
            <person name="Petrovsky N."/>
            <person name="Piazza S."/>
            <person name="Reed J."/>
            <person name="Reid J.F."/>
            <person name="Ring B.Z."/>
            <person name="Ringwald M."/>
            <person name="Rost B."/>
            <person name="Ruan Y."/>
            <person name="Salzberg S.L."/>
            <person name="Sandelin A."/>
            <person name="Schneider C."/>
            <person name="Schoenbach C."/>
            <person name="Sekiguchi K."/>
            <person name="Semple C.A."/>
            <person name="Seno S."/>
            <person name="Sessa L."/>
            <person name="Sheng Y."/>
            <person name="Shibata Y."/>
            <person name="Shimada H."/>
            <person name="Shimada K."/>
            <person name="Silva D."/>
            <person name="Sinclair B."/>
            <person name="Sperling S."/>
            <person name="Stupka E."/>
            <person name="Sugiura K."/>
            <person name="Sultana R."/>
            <person name="Takenaka Y."/>
            <person name="Taki K."/>
            <person name="Tammoja K."/>
            <person name="Tan S.L."/>
            <person name="Tang S."/>
            <person name="Taylor M.S."/>
            <person name="Tegner J."/>
            <person name="Teichmann S.A."/>
            <person name="Ueda H.R."/>
            <person name="van Nimwegen E."/>
            <person name="Verardo R."/>
            <person name="Wei C.L."/>
            <person name="Yagi K."/>
            <person name="Yamanishi H."/>
            <person name="Zabarovsky E."/>
            <person name="Zhu S."/>
            <person name="Zimmer A."/>
            <person name="Hide W."/>
            <person name="Bult C."/>
            <person name="Grimmond S.M."/>
            <person name="Teasdale R.D."/>
            <person name="Liu E.T."/>
            <person name="Brusic V."/>
            <person name="Quackenbush J."/>
            <person name="Wahlestedt C."/>
            <person name="Mattick J.S."/>
            <person name="Hume D.A."/>
            <person name="Kai C."/>
            <person name="Sasaki D."/>
            <person name="Tomaru Y."/>
            <person name="Fukuda S."/>
            <person name="Kanamori-Katayama M."/>
            <person name="Suzuki M."/>
            <person name="Aoki J."/>
            <person name="Arakawa T."/>
            <person name="Iida J."/>
            <person name="Imamura K."/>
            <person name="Itoh M."/>
            <person name="Kato T."/>
            <person name="Kawaji H."/>
            <person name="Kawagashira N."/>
            <person name="Kawashima T."/>
            <person name="Kojima M."/>
            <person name="Kondo S."/>
            <person name="Konno H."/>
            <person name="Nakano K."/>
            <person name="Ninomiya N."/>
            <person name="Nishio T."/>
            <person name="Okada M."/>
            <person name="Plessy C."/>
            <person name="Shibata K."/>
            <person name="Shiraki T."/>
            <person name="Suzuki S."/>
            <person name="Tagami M."/>
            <person name="Waki K."/>
            <person name="Watahiki A."/>
            <person name="Okamura-Oho Y."/>
            <person name="Suzuki H."/>
            <person name="Kawai J."/>
            <person name="Hayashizaki Y."/>
        </authorList>
    </citation>
    <scope>NUCLEOTIDE SEQUENCE [LARGE SCALE MRNA] (ISOFORMS 1 AND 3)</scope>
    <source>
        <strain>C57BL/6J</strain>
        <strain>NOD</strain>
        <tissue>Corpora quadrigemina</tissue>
        <tissue>Head</tissue>
        <tissue>Kidney</tissue>
    </source>
</reference>
<reference key="4">
    <citation type="journal article" date="2004" name="Genome Res.">
        <title>The status, quality, and expansion of the NIH full-length cDNA project: the Mammalian Gene Collection (MGC).</title>
        <authorList>
            <consortium name="The MGC Project Team"/>
        </authorList>
    </citation>
    <scope>NUCLEOTIDE SEQUENCE [LARGE SCALE MRNA] (ISOFORM 2)</scope>
    <scope>NUCLEOTIDE SEQUENCE [LARGE SCALE MRNA] OF 158-534</scope>
    <source>
        <strain>C57BL/6J</strain>
        <strain>Czech II</strain>
        <tissue>Egg</tissue>
        <tissue>Mammary tumor</tissue>
    </source>
</reference>
<reference key="5">
    <citation type="journal article" date="2008" name="J. Biol. Chem.">
        <title>Identification of a novel noninflammatory biosynthetic pathway of platelet-activating factor.</title>
        <authorList>
            <person name="Harayama T."/>
            <person name="Shindou H."/>
            <person name="Ogasawara R."/>
            <person name="Suwabe A."/>
            <person name="Shimizu T."/>
        </authorList>
    </citation>
    <scope>FUNCTION</scope>
    <scope>CATALYTIC ACTIVITY</scope>
    <scope>ACTIVITY REGULATION</scope>
    <scope>BIOPHYSICOCHEMICAL PROPERTIES</scope>
    <scope>INDUCTION</scope>
    <scope>MUTAGENESIS OF 135-HIS--ASP-140; HIS-135; ASP-140; ILE-160; ILE-162; TRP-163; 164-GLY--ARG-177; GLY-164; LEU-166; ILE-167; ARG-168; TYR-169; ILE-170; ARG-171; VAL-173; PHE-174; VAL-175; ARG-177; 203-ILE--GLY-209; GLU-208; GLY-209; 227-PRO--PRO-233; PRO-227; PRO-230 AND PRO-233</scope>
</reference>
<reference key="6">
    <citation type="journal article" date="2008" name="Proc. Natl. Acad. Sci. U.S.A.">
        <title>Mammalian acyl-CoA:lysophosphatidylcholine acyltransferase enzymes.</title>
        <authorList>
            <person name="Soupene E."/>
            <person name="Fyrst H."/>
            <person name="Kuypers F.A."/>
        </authorList>
    </citation>
    <scope>FUNCTION</scope>
    <scope>CATALYTIC ACTIVITY</scope>
    <scope>ACTIVITY REGULATION</scope>
    <scope>SUBCELLULAR LOCATION</scope>
    <scope>TISSUE SPECIFICITY</scope>
</reference>
<reference key="7">
    <citation type="journal article" date="2010" name="Cell">
        <title>A tissue-specific atlas of mouse protein phosphorylation and expression.</title>
        <authorList>
            <person name="Huttlin E.L."/>
            <person name="Jedrychowski M.P."/>
            <person name="Elias J.E."/>
            <person name="Goswami T."/>
            <person name="Rad R."/>
            <person name="Beausoleil S.A."/>
            <person name="Villen J."/>
            <person name="Haas W."/>
            <person name="Sowa M.E."/>
            <person name="Gygi S.P."/>
        </authorList>
    </citation>
    <scope>IDENTIFICATION BY MASS SPECTROMETRY [LARGE SCALE ANALYSIS]</scope>
    <source>
        <tissue>Lung</tissue>
        <tissue>Spleen</tissue>
    </source>
</reference>
<comment type="function">
    <text evidence="1 2 6 8 9">Exhibits both acyltransferase and acetyltransferase activities (PubMed:16704971, PubMed:18156367, PubMed:18285344). Activity is calcium-independent (PubMed:16704971, PubMed:18285344). Catalyzes the conversion of lysophosphatidylcholine (1-acyl-sn-glycero-3-phosphocholine or LPC) into phosphatidylcholine (1,2-diacyl-sn-glycero-3-phosphocholine or PC) (PubMed:16704971, PubMed:18156367, PubMed:18285344). Catalyzes the conversion 1-acyl-sn-glycerol-3-phosphate (lysophosphatidic acid or LPA) into 1,2-diacyl-sn-glycerol-3-phosphate (phosphatidic acid or PA) by incorporating an acyl moiety at the sn-2 position of the glycerol backbone (By similarity). Displays a clear preference for saturated fatty acyl-CoAs, and 1-myristoyl or 1-palmitoyl LPC as acyl donors and acceptors, respectively (PubMed:16704971, PubMed:18285344). Involved in platelet-activating factor (PAF) biosynthesis by catalyzing the conversion of the PAF precursor, 1-O-alkyl-sn-glycero-3-phosphocholine (lyso-PAF) into 1-O-alkyl-2-acetyl-sn-glycero-3-phosphocholine (PAF) (PubMed:18285344). May synthesize phosphatidylcholine in pulmonary surfactant, thereby playing a pivotal role in respiratory physiology (PubMed:16704971). Involved in the regulation of lipid droplet number and size (By similarity).</text>
</comment>
<comment type="catalytic activity">
    <reaction evidence="6 8 9">
        <text>a 1-acyl-sn-glycero-3-phosphocholine + an acyl-CoA = a 1,2-diacyl-sn-glycero-3-phosphocholine + CoA</text>
        <dbReference type="Rhea" id="RHEA:12937"/>
        <dbReference type="ChEBI" id="CHEBI:57287"/>
        <dbReference type="ChEBI" id="CHEBI:57643"/>
        <dbReference type="ChEBI" id="CHEBI:58168"/>
        <dbReference type="ChEBI" id="CHEBI:58342"/>
        <dbReference type="EC" id="2.3.1.23"/>
    </reaction>
</comment>
<comment type="catalytic activity">
    <reaction evidence="9">
        <text>a 1-O-alkyl-sn-glycero-3-phosphocholine + acetyl-CoA = a 1-O-alkyl-2-acetyl-sn-glycero-3-phosphocholine + CoA</text>
        <dbReference type="Rhea" id="RHEA:18461"/>
        <dbReference type="ChEBI" id="CHEBI:30909"/>
        <dbReference type="ChEBI" id="CHEBI:36707"/>
        <dbReference type="ChEBI" id="CHEBI:57287"/>
        <dbReference type="ChEBI" id="CHEBI:57288"/>
        <dbReference type="EC" id="2.3.1.67"/>
    </reaction>
</comment>
<comment type="catalytic activity">
    <reaction evidence="1">
        <text>a 1-acyl-sn-glycero-3-phosphate + an acyl-CoA = a 1,2-diacyl-sn-glycero-3-phosphate + CoA</text>
        <dbReference type="Rhea" id="RHEA:19709"/>
        <dbReference type="ChEBI" id="CHEBI:57287"/>
        <dbReference type="ChEBI" id="CHEBI:57970"/>
        <dbReference type="ChEBI" id="CHEBI:58342"/>
        <dbReference type="ChEBI" id="CHEBI:58608"/>
        <dbReference type="EC" id="2.3.1.51"/>
    </reaction>
</comment>
<comment type="catalytic activity">
    <reaction evidence="6 9">
        <text>a 1-O-(1Z-alkenyl)-sn-glycero-3-phosphocholine + an acyl-CoA = a 1-O-(1Z-alkenyl)-2-acyl-sn-glycero-3-phosphocholine + CoA</text>
        <dbReference type="Rhea" id="RHEA:10344"/>
        <dbReference type="ChEBI" id="CHEBI:57287"/>
        <dbReference type="ChEBI" id="CHEBI:58342"/>
        <dbReference type="ChEBI" id="CHEBI:77286"/>
        <dbReference type="ChEBI" id="CHEBI:77287"/>
        <dbReference type="EC" id="2.3.1.25"/>
    </reaction>
</comment>
<comment type="catalytic activity">
    <reaction evidence="1">
        <text>1-acyl-sn-glycero-3-phospho-(1'-sn-glycerol) + an acyl-CoA = a 1,2-diacyl-sn-glycero-3-phospho-(1'-sn-glycerol) + CoA</text>
        <dbReference type="Rhea" id="RHEA:33203"/>
        <dbReference type="ChEBI" id="CHEBI:57287"/>
        <dbReference type="ChEBI" id="CHEBI:58342"/>
        <dbReference type="ChEBI" id="CHEBI:64716"/>
        <dbReference type="ChEBI" id="CHEBI:64840"/>
    </reaction>
    <physiologicalReaction direction="left-to-right" evidence="1">
        <dbReference type="Rhea" id="RHEA:33204"/>
    </physiologicalReaction>
</comment>
<comment type="catalytic activity">
    <reaction evidence="6 9">
        <text>1-hexadecanoyl-sn-glycero-3-phosphocholine + hexadecanoyl-CoA = 1,2-dihexadecanoyl-sn-glycero-3-phosphocholine + CoA</text>
        <dbReference type="Rhea" id="RHEA:35983"/>
        <dbReference type="ChEBI" id="CHEBI:57287"/>
        <dbReference type="ChEBI" id="CHEBI:57379"/>
        <dbReference type="ChEBI" id="CHEBI:72998"/>
        <dbReference type="ChEBI" id="CHEBI:72999"/>
    </reaction>
    <physiologicalReaction direction="left-to-right" evidence="13">
        <dbReference type="Rhea" id="RHEA:35984"/>
    </physiologicalReaction>
</comment>
<comment type="catalytic activity">
    <reaction evidence="6 9">
        <text>1-O-hexadecyl-sn-glycero-3-phosphocholine + hexadecanoyl-CoA = 1-O-hexadecyl-2-hexadecanoyl-sn-glycero-3-phosphocholine + CoA</text>
        <dbReference type="Rhea" id="RHEA:37811"/>
        <dbReference type="ChEBI" id="CHEBI:57287"/>
        <dbReference type="ChEBI" id="CHEBI:57379"/>
        <dbReference type="ChEBI" id="CHEBI:64496"/>
        <dbReference type="ChEBI" id="CHEBI:72744"/>
    </reaction>
    <physiologicalReaction direction="left-to-right" evidence="13">
        <dbReference type="Rhea" id="RHEA:37812"/>
    </physiologicalReaction>
</comment>
<comment type="catalytic activity">
    <reaction evidence="6 9">
        <text>a 1-O-(1Z-alkenyl)-sn-glycero-3-phosphocholine + hexadecanoyl-CoA = 1-O-(1Z)-alkenyl-2-hexadecanoyl-sn-glycero-3-phosphocholine + CoA</text>
        <dbReference type="Rhea" id="RHEA:37819"/>
        <dbReference type="ChEBI" id="CHEBI:57287"/>
        <dbReference type="ChEBI" id="CHEBI:57379"/>
        <dbReference type="ChEBI" id="CHEBI:77287"/>
        <dbReference type="ChEBI" id="CHEBI:77304"/>
    </reaction>
    <physiologicalReaction direction="left-to-right" evidence="13">
        <dbReference type="Rhea" id="RHEA:37820"/>
    </physiologicalReaction>
</comment>
<comment type="catalytic activity">
    <reaction evidence="6">
        <text>1-hexadecanoyl-sn-glycero-3-phospho-(1'-sn-glycerol) + hexadecanoyl-CoA = 1,2-dihexadecanoyl-sn-glycero-3-phospho-(1'-sn-glycerol) + CoA</text>
        <dbReference type="Rhea" id="RHEA:35851"/>
        <dbReference type="ChEBI" id="CHEBI:57287"/>
        <dbReference type="ChEBI" id="CHEBI:57379"/>
        <dbReference type="ChEBI" id="CHEBI:72829"/>
        <dbReference type="ChEBI" id="CHEBI:75158"/>
    </reaction>
    <physiologicalReaction direction="left-to-right" evidence="13">
        <dbReference type="Rhea" id="RHEA:35852"/>
    </physiologicalReaction>
</comment>
<comment type="catalytic activity">
    <reaction evidence="6">
        <text>1-dodecanoyl-sn-glycero-3-phosphocholine + hexadecanoyl-CoA = 1-dodecanoyl-2-hexadecanoyl-sn-glycero-3-phosphocholine + CoA</text>
        <dbReference type="Rhea" id="RHEA:37511"/>
        <dbReference type="ChEBI" id="CHEBI:57287"/>
        <dbReference type="ChEBI" id="CHEBI:57379"/>
        <dbReference type="ChEBI" id="CHEBI:74966"/>
        <dbReference type="ChEBI" id="CHEBI:75017"/>
    </reaction>
    <physiologicalReaction direction="left-to-right" evidence="13">
        <dbReference type="Rhea" id="RHEA:37512"/>
    </physiologicalReaction>
</comment>
<comment type="catalytic activity">
    <reaction evidence="6">
        <text>1-tetradecanoyl-sn-glycero-3-phosphocholine + hexadecanoyl-CoA = 1-tetradecanoyl-2-hexadecanoyl-sn-glycero-3-phosphocholine + CoA</text>
        <dbReference type="Rhea" id="RHEA:37655"/>
        <dbReference type="ChEBI" id="CHEBI:57287"/>
        <dbReference type="ChEBI" id="CHEBI:57379"/>
        <dbReference type="ChEBI" id="CHEBI:64489"/>
        <dbReference type="ChEBI" id="CHEBI:75062"/>
    </reaction>
    <physiologicalReaction direction="left-to-right" evidence="13">
        <dbReference type="Rhea" id="RHEA:37656"/>
    </physiologicalReaction>
</comment>
<comment type="catalytic activity">
    <reaction evidence="6">
        <text>1-O-octadecyl-sn-glycero-3-phosphocholine + hexadecanoyl-CoA = 1-O-octadecyl-2-hexadecanoyl-sn-glycero-3-phosphocholine + CoA</text>
        <dbReference type="Rhea" id="RHEA:37839"/>
        <dbReference type="ChEBI" id="CHEBI:57287"/>
        <dbReference type="ChEBI" id="CHEBI:57379"/>
        <dbReference type="ChEBI" id="CHEBI:75216"/>
        <dbReference type="ChEBI" id="CHEBI:75290"/>
    </reaction>
    <physiologicalReaction direction="left-to-right" evidence="13">
        <dbReference type="Rhea" id="RHEA:37840"/>
    </physiologicalReaction>
</comment>
<comment type="catalytic activity">
    <reaction evidence="9">
        <text>1-octadecanoyl-sn-glycero-3-phosphocholine + hexadecanoyl-CoA = 1-octadecanoyl-2-hexadecanoyl-sn-glycero-3-phosphocholine + CoA</text>
        <dbReference type="Rhea" id="RHEA:37527"/>
        <dbReference type="ChEBI" id="CHEBI:57287"/>
        <dbReference type="ChEBI" id="CHEBI:57379"/>
        <dbReference type="ChEBI" id="CHEBI:73858"/>
        <dbReference type="ChEBI" id="CHEBI:75026"/>
    </reaction>
    <physiologicalReaction direction="left-to-right" evidence="15">
        <dbReference type="Rhea" id="RHEA:37528"/>
    </physiologicalReaction>
</comment>
<comment type="catalytic activity">
    <reaction evidence="6">
        <text>1-(9Z-octadecenoyl)-sn-glycero-3-phosphocholine + hexadecanoyl-CoA = 1-(9Z-octadecenoyl)-2-hexadecanoyl-sn-glycero-3-phosphocholine + CoA</text>
        <dbReference type="Rhea" id="RHEA:37383"/>
        <dbReference type="ChEBI" id="CHEBI:28610"/>
        <dbReference type="ChEBI" id="CHEBI:57287"/>
        <dbReference type="ChEBI" id="CHEBI:57379"/>
        <dbReference type="ChEBI" id="CHEBI:74667"/>
    </reaction>
    <physiologicalReaction direction="left-to-right" evidence="13">
        <dbReference type="Rhea" id="RHEA:37384"/>
    </physiologicalReaction>
</comment>
<comment type="catalytic activity">
    <reaction evidence="6">
        <text>1-eicosanoyl-sn-glycero-3-phosphocholine + hexadecanoyl-CoA = 1-eicosanoyl-2-hexadecanoyl-sn-glycero-3-phosphocholine + CoA</text>
        <dbReference type="Rhea" id="RHEA:37843"/>
        <dbReference type="ChEBI" id="CHEBI:57287"/>
        <dbReference type="ChEBI" id="CHEBI:57379"/>
        <dbReference type="ChEBI" id="CHEBI:74968"/>
        <dbReference type="ChEBI" id="CHEBI:75294"/>
    </reaction>
    <physiologicalReaction direction="left-to-right" evidence="13">
        <dbReference type="Rhea" id="RHEA:37844"/>
    </physiologicalReaction>
</comment>
<comment type="catalytic activity">
    <reaction evidence="6 9">
        <text>hexanoyl-CoA + 1-hexadecanoyl-sn-glycero-3-phosphocholine = 1-hexadecanoyl-2-hexanoyl-sn-glycero-3-phosphocholine + CoA</text>
        <dbReference type="Rhea" id="RHEA:37855"/>
        <dbReference type="ChEBI" id="CHEBI:57287"/>
        <dbReference type="ChEBI" id="CHEBI:62620"/>
        <dbReference type="ChEBI" id="CHEBI:72998"/>
        <dbReference type="ChEBI" id="CHEBI:75301"/>
    </reaction>
    <physiologicalReaction direction="left-to-right" evidence="13">
        <dbReference type="Rhea" id="RHEA:37856"/>
    </physiologicalReaction>
</comment>
<comment type="catalytic activity">
    <reaction evidence="6 9">
        <text>octanoyl-CoA + 1-hexadecanoyl-sn-glycero-3-phosphocholine = 1-hexadecanoyl-2-octanoyl-sn-glycero-3-phosphocholine + CoA</text>
        <dbReference type="Rhea" id="RHEA:37859"/>
        <dbReference type="ChEBI" id="CHEBI:57287"/>
        <dbReference type="ChEBI" id="CHEBI:57386"/>
        <dbReference type="ChEBI" id="CHEBI:72998"/>
        <dbReference type="ChEBI" id="CHEBI:75302"/>
    </reaction>
    <physiologicalReaction direction="left-to-right" evidence="13">
        <dbReference type="Rhea" id="RHEA:37860"/>
    </physiologicalReaction>
</comment>
<comment type="catalytic activity">
    <reaction evidence="6 9">
        <text>decanoyl-CoA + 1-hexadecanoyl-sn-glycero-3-phosphocholine = 1-hexadecanoyl-2-decanoyl-sn-glycero-3-phosphocholine + CoA</text>
        <dbReference type="Rhea" id="RHEA:37863"/>
        <dbReference type="ChEBI" id="CHEBI:57287"/>
        <dbReference type="ChEBI" id="CHEBI:61430"/>
        <dbReference type="ChEBI" id="CHEBI:72998"/>
        <dbReference type="ChEBI" id="CHEBI:75300"/>
    </reaction>
    <physiologicalReaction direction="left-to-right" evidence="13">
        <dbReference type="Rhea" id="RHEA:37864"/>
    </physiologicalReaction>
</comment>
<comment type="catalytic activity">
    <reaction evidence="6 9">
        <text>dodecanoyl-CoA + 1-hexadecanoyl-sn-glycero-3-phosphocholine = 1-hexadecanoyl-2-dodecanoyl-sn-glycero-3-phosphocholine + CoA</text>
        <dbReference type="Rhea" id="RHEA:37515"/>
        <dbReference type="ChEBI" id="CHEBI:57287"/>
        <dbReference type="ChEBI" id="CHEBI:57375"/>
        <dbReference type="ChEBI" id="CHEBI:72998"/>
        <dbReference type="ChEBI" id="CHEBI:75018"/>
    </reaction>
    <physiologicalReaction direction="left-to-right" evidence="13">
        <dbReference type="Rhea" id="RHEA:37516"/>
    </physiologicalReaction>
</comment>
<comment type="catalytic activity">
    <reaction evidence="6 9">
        <text>tetradecanoyl-CoA + 1-hexadecanoyl-sn-glycero-3-phosphocholine = 1-hexadecanoyl-2-tetradecanoyl-sn-glycero-3-phosphocholine + CoA</text>
        <dbReference type="Rhea" id="RHEA:37867"/>
        <dbReference type="ChEBI" id="CHEBI:57287"/>
        <dbReference type="ChEBI" id="CHEBI:57385"/>
        <dbReference type="ChEBI" id="CHEBI:72998"/>
        <dbReference type="ChEBI" id="CHEBI:75304"/>
    </reaction>
    <physiologicalReaction direction="left-to-right" evidence="13">
        <dbReference type="Rhea" id="RHEA:37868"/>
    </physiologicalReaction>
</comment>
<comment type="catalytic activity">
    <reaction evidence="6">
        <text>1-hexadecanoyl-sn-glycero-3-phosphocholine + (9Z)-octadecenoyl-CoA = 1-hexadecanoyl-2-(9Z-octadecenoyl)-sn-glycero-3-phosphocholine + CoA</text>
        <dbReference type="Rhea" id="RHEA:35991"/>
        <dbReference type="ChEBI" id="CHEBI:57287"/>
        <dbReference type="ChEBI" id="CHEBI:57387"/>
        <dbReference type="ChEBI" id="CHEBI:72998"/>
        <dbReference type="ChEBI" id="CHEBI:73001"/>
    </reaction>
    <physiologicalReaction direction="left-to-right" evidence="13">
        <dbReference type="Rhea" id="RHEA:35992"/>
    </physiologicalReaction>
</comment>
<comment type="catalytic activity">
    <reaction evidence="6">
        <text>(9Z,12Z)-octadecadienoyl-CoA + 1-hexadecanoyl-sn-glycero-3-phosphocholine = 1-hexadecanoyl-2-(9Z,12Z-octadecadienoyl)-sn-glycero-3-phosphocholine + CoA</text>
        <dbReference type="Rhea" id="RHEA:35995"/>
        <dbReference type="ChEBI" id="CHEBI:57287"/>
        <dbReference type="ChEBI" id="CHEBI:57383"/>
        <dbReference type="ChEBI" id="CHEBI:72998"/>
        <dbReference type="ChEBI" id="CHEBI:73002"/>
    </reaction>
    <physiologicalReaction direction="left-to-right" evidence="13">
        <dbReference type="Rhea" id="RHEA:35996"/>
    </physiologicalReaction>
</comment>
<comment type="catalytic activity">
    <reaction evidence="6">
        <text>(4Z,7Z,10Z,13Z,16Z,19Z)-docosahexaenoyl-CoA + 1-hexadecanoyl-sn-glycero-3-phosphocholine = 1-hexadecanoyl-2-(4Z,7Z,10Z,13Z,16Z,19Z-docosahexaenoyl)-sn-glycero-3-phosphocholine + CoA</text>
        <dbReference type="Rhea" id="RHEA:37475"/>
        <dbReference type="ChEBI" id="CHEBI:57287"/>
        <dbReference type="ChEBI" id="CHEBI:72998"/>
        <dbReference type="ChEBI" id="CHEBI:74298"/>
        <dbReference type="ChEBI" id="CHEBI:74963"/>
    </reaction>
    <physiologicalReaction direction="left-to-right" evidence="13">
        <dbReference type="Rhea" id="RHEA:37476"/>
    </physiologicalReaction>
</comment>
<comment type="catalytic activity">
    <reaction evidence="9">
        <text>1-hexadecanoyl-sn-glycero-3-phosphocholine + acetyl-CoA = 1-hexadecanoyl-2-acetyl-sn-glycero-3-phosphocholine + CoA</text>
        <dbReference type="Rhea" id="RHEA:37703"/>
        <dbReference type="ChEBI" id="CHEBI:57287"/>
        <dbReference type="ChEBI" id="CHEBI:57288"/>
        <dbReference type="ChEBI" id="CHEBI:72998"/>
        <dbReference type="ChEBI" id="CHEBI:75219"/>
    </reaction>
    <physiologicalReaction direction="left-to-right" evidence="15">
        <dbReference type="Rhea" id="RHEA:37704"/>
    </physiologicalReaction>
</comment>
<comment type="catalytic activity">
    <reaction evidence="9">
        <text>eicosanoyl-CoA + 1-hexadecanoyl-sn-glycero-3-phosphocholine = 1-hexadecanoyl-2-eicosanoyl-sn-glycero-3-phosphocholine + CoA</text>
        <dbReference type="Rhea" id="RHEA:43264"/>
        <dbReference type="ChEBI" id="CHEBI:57287"/>
        <dbReference type="ChEBI" id="CHEBI:57380"/>
        <dbReference type="ChEBI" id="CHEBI:72998"/>
        <dbReference type="ChEBI" id="CHEBI:82943"/>
    </reaction>
    <physiologicalReaction direction="left-to-right" evidence="15">
        <dbReference type="Rhea" id="RHEA:43265"/>
    </physiologicalReaction>
</comment>
<comment type="catalytic activity">
    <reaction evidence="9">
        <text>1-O-hexadecyl-sn-glycero-3-phosphocholine + acetyl-CoA = 1-O-hexadecyl-2-acetyl-sn-glycero-3-phosphocholine + CoA</text>
        <dbReference type="Rhea" id="RHEA:37719"/>
        <dbReference type="ChEBI" id="CHEBI:44811"/>
        <dbReference type="ChEBI" id="CHEBI:57287"/>
        <dbReference type="ChEBI" id="CHEBI:57288"/>
        <dbReference type="ChEBI" id="CHEBI:64496"/>
    </reaction>
    <physiologicalReaction direction="left-to-right" evidence="15">
        <dbReference type="Rhea" id="RHEA:37720"/>
    </physiologicalReaction>
</comment>
<comment type="catalytic activity">
    <reaction evidence="1">
        <text>a 1-acyl-sn-glycero-3-phosphocholine + hexadecanoyl-CoA = 1-acyl-2-hexadecanoyl-sn-glycero-3-phosphocholine + CoA</text>
        <dbReference type="Rhea" id="RHEA:37803"/>
        <dbReference type="ChEBI" id="CHEBI:57287"/>
        <dbReference type="ChEBI" id="CHEBI:57379"/>
        <dbReference type="ChEBI" id="CHEBI:58168"/>
        <dbReference type="ChEBI" id="CHEBI:75279"/>
    </reaction>
    <physiologicalReaction direction="left-to-right" evidence="1">
        <dbReference type="Rhea" id="RHEA:37804"/>
    </physiologicalReaction>
</comment>
<comment type="catalytic activity">
    <reaction evidence="1">
        <text>a 1-acyl-sn-glycero-3-phosphate + hexadecanoyl-CoA = 1-acyl-2-hexadecanoyl-sn-glycero-3-phosphate + CoA</text>
        <dbReference type="Rhea" id="RHEA:33315"/>
        <dbReference type="ChEBI" id="CHEBI:57287"/>
        <dbReference type="ChEBI" id="CHEBI:57379"/>
        <dbReference type="ChEBI" id="CHEBI:57970"/>
        <dbReference type="ChEBI" id="CHEBI:64862"/>
    </reaction>
    <physiologicalReaction direction="left-to-right" evidence="1">
        <dbReference type="Rhea" id="RHEA:33316"/>
    </physiologicalReaction>
</comment>
<comment type="catalytic activity">
    <reaction evidence="1">
        <text>1-acyl-sn-glycero-3-phospho-(1'-sn-glycerol) + hexadecanoyl-CoA = 1-acyl-2-hexadecanoyl-sn-glycero-3-phospho-(1'-sn-glycerol) + CoA</text>
        <dbReference type="Rhea" id="RHEA:37807"/>
        <dbReference type="ChEBI" id="CHEBI:57287"/>
        <dbReference type="ChEBI" id="CHEBI:57379"/>
        <dbReference type="ChEBI" id="CHEBI:64840"/>
        <dbReference type="ChEBI" id="CHEBI:75280"/>
    </reaction>
    <physiologicalReaction direction="left-to-right" evidence="1">
        <dbReference type="Rhea" id="RHEA:37808"/>
    </physiologicalReaction>
</comment>
<comment type="activity regulation">
    <text evidence="8 9">Not activated by inflammatory stimulation (PubMed:18285344). Inhibited by Cu(2+), Fe(2+), Ca(2+) and Mg(2+) (PubMed:18156367, PubMed:18285344). Activity is not affected by Co(2+) or Mn(2+) (PubMed:18285344).</text>
</comment>
<comment type="biophysicochemical properties">
    <kinetics>
        <KM evidence="6 9">2.3 uM for 1-palmitoyl-LPC</KM>
        <KM evidence="6 9">3 uM for palmitoyl-CoA</KM>
    </kinetics>
    <phDependence>
        <text evidence="6 9">Optimum pH is 7.5.</text>
    </phDependence>
</comment>
<comment type="pathway">
    <text>Lipid metabolism; phospholipid metabolism.</text>
</comment>
<comment type="subcellular location">
    <subcellularLocation>
        <location evidence="6">Endoplasmic reticulum membrane</location>
        <topology evidence="2">Single-pass type II membrane protein</topology>
    </subcellularLocation>
    <subcellularLocation>
        <location evidence="6">Golgi apparatus membrane</location>
        <topology evidence="2">Single-pass type II membrane protein</topology>
    </subcellularLocation>
    <subcellularLocation>
        <location evidence="14">Cell membrane</location>
        <topology evidence="2">Single-pass type II membrane protein</topology>
    </subcellularLocation>
    <subcellularLocation>
        <location evidence="2">Lipid droplet</location>
    </subcellularLocation>
    <text evidence="2">May adopt a monotopic topology when embedded in the lipid monolayer of the lipid droplet, with both termini exposed to the cytoplasm.</text>
</comment>
<comment type="alternative products">
    <event type="alternative splicing"/>
    <isoform>
        <id>Q3TFD2-1</id>
        <name>1</name>
        <sequence type="displayed"/>
    </isoform>
    <isoform>
        <id>Q3TFD2-2</id>
        <name>2</name>
        <sequence type="described" ref="VSP_019914"/>
    </isoform>
    <isoform>
        <id>Q3TFD2-3</id>
        <name>3</name>
        <sequence type="described" ref="VSP_019913"/>
    </isoform>
</comment>
<comment type="tissue specificity">
    <text evidence="6 7 8">Predominantly expressed in lung where it is enriched in alveolar type II cells. Expressed at lower levels in spleen and brain. Also detected in erythroleukemic cells and reticulocytes. Weakly or not expressed in other tissues.</text>
</comment>
<comment type="developmental stage">
    <text evidence="7">Expression increases steadily throughout embryogenesis and decreases slightly in the adult.</text>
</comment>
<comment type="induction">
    <text evidence="9">Constitutively expressed. Not induced by inflammatory stimulation.</text>
</comment>
<comment type="domain">
    <text evidence="13">The di-lysine motif may confer endoplasmic reticulum localization.</text>
</comment>
<comment type="domain">
    <text evidence="9">The HXXXXD motif is essential for acyltransferase activity and may constitute the binding site for the phosphate moiety of the glycerol-3-phosphocholine.</text>
</comment>
<comment type="similarity">
    <text evidence="12">Belongs to the 1-acyl-sn-glycerol-3-phosphate acyltransferase family.</text>
</comment>
<comment type="sequence caution" evidence="12">
    <conflict type="erroneous initiation">
        <sequence resource="EMBL-CDS" id="AAH05662"/>
    </conflict>
    <text>Truncated N-terminus.</text>
</comment>
<comment type="sequence caution" evidence="12">
    <conflict type="erroneous initiation">
        <sequence resource="EMBL-CDS" id="BAC32594"/>
    </conflict>
    <text>Truncated N-terminus.</text>
</comment>
<comment type="sequence caution" evidence="12">
    <conflict type="erroneous initiation">
        <sequence resource="EMBL-CDS" id="BAC32760"/>
    </conflict>
    <text>Truncated N-terminus.</text>
</comment>
<dbReference type="EC" id="2.3.1.23" evidence="6 8 9"/>
<dbReference type="EC" id="2.3.1.51" evidence="1"/>
<dbReference type="EC" id="2.3.1.25" evidence="6 9"/>
<dbReference type="EC" id="2.3.1.67" evidence="9"/>
<dbReference type="EMBL" id="AB244717">
    <property type="protein sequence ID" value="BAE94687.2"/>
    <property type="molecule type" value="mRNA"/>
</dbReference>
<dbReference type="EMBL" id="AK046079">
    <property type="protein sequence ID" value="BAC32594.1"/>
    <property type="status" value="ALT_INIT"/>
    <property type="molecule type" value="mRNA"/>
</dbReference>
<dbReference type="EMBL" id="AK046507">
    <property type="protein sequence ID" value="BAC32760.1"/>
    <property type="status" value="ALT_INIT"/>
    <property type="molecule type" value="mRNA"/>
</dbReference>
<dbReference type="EMBL" id="AK081865">
    <property type="protein sequence ID" value="BAC38353.1"/>
    <property type="molecule type" value="mRNA"/>
</dbReference>
<dbReference type="EMBL" id="AK155286">
    <property type="protein sequence ID" value="BAE33166.1"/>
    <property type="molecule type" value="mRNA"/>
</dbReference>
<dbReference type="EMBL" id="AK169190">
    <property type="protein sequence ID" value="BAE40966.1"/>
    <property type="molecule type" value="mRNA"/>
</dbReference>
<dbReference type="EMBL" id="AK170723">
    <property type="protein sequence ID" value="BAE41980.1"/>
    <property type="molecule type" value="mRNA"/>
</dbReference>
<dbReference type="EMBL" id="AK171582">
    <property type="protein sequence ID" value="BAE42540.1"/>
    <property type="molecule type" value="mRNA"/>
</dbReference>
<dbReference type="EMBL" id="BC005662">
    <property type="protein sequence ID" value="AAH05662.1"/>
    <property type="status" value="ALT_INIT"/>
    <property type="molecule type" value="mRNA"/>
</dbReference>
<dbReference type="EMBL" id="BC066809">
    <property type="protein sequence ID" value="AAH66809.1"/>
    <property type="molecule type" value="mRNA"/>
</dbReference>
<dbReference type="CCDS" id="CCDS36726.1">
    <molecule id="Q3TFD2-1"/>
</dbReference>
<dbReference type="RefSeq" id="NP_001355611.1">
    <molecule id="Q3TFD2-3"/>
    <property type="nucleotide sequence ID" value="NM_001368682.1"/>
</dbReference>
<dbReference type="RefSeq" id="NP_663351.3">
    <molecule id="Q3TFD2-1"/>
    <property type="nucleotide sequence ID" value="NM_145376.5"/>
</dbReference>
<dbReference type="SMR" id="Q3TFD2"/>
<dbReference type="BioGRID" id="229195">
    <property type="interactions" value="7"/>
</dbReference>
<dbReference type="FunCoup" id="Q3TFD2">
    <property type="interactions" value="2582"/>
</dbReference>
<dbReference type="STRING" id="10090.ENSMUSP00000022099"/>
<dbReference type="SwissLipids" id="SLP:000000297"/>
<dbReference type="GlyGen" id="Q3TFD2">
    <property type="glycosylation" value="1 site"/>
</dbReference>
<dbReference type="iPTMnet" id="Q3TFD2"/>
<dbReference type="PhosphoSitePlus" id="Q3TFD2"/>
<dbReference type="SwissPalm" id="Q3TFD2"/>
<dbReference type="PaxDb" id="10090-ENSMUSP00000022099"/>
<dbReference type="PeptideAtlas" id="Q3TFD2"/>
<dbReference type="ProteomicsDB" id="294337">
    <molecule id="Q3TFD2-1"/>
</dbReference>
<dbReference type="ProteomicsDB" id="294338">
    <molecule id="Q3TFD2-2"/>
</dbReference>
<dbReference type="ProteomicsDB" id="294339">
    <molecule id="Q3TFD2-3"/>
</dbReference>
<dbReference type="Pumba" id="Q3TFD2"/>
<dbReference type="Antibodypedia" id="1587">
    <property type="antibodies" value="220 antibodies from 28 providers"/>
</dbReference>
<dbReference type="DNASU" id="210992"/>
<dbReference type="Ensembl" id="ENSMUST00000022099.15">
    <molecule id="Q3TFD2-1"/>
    <property type="protein sequence ID" value="ENSMUSP00000022099.9"/>
    <property type="gene ID" value="ENSMUSG00000021608.16"/>
</dbReference>
<dbReference type="Ensembl" id="ENSMUST00000223060.2">
    <molecule id="Q3TFD2-2"/>
    <property type="protein sequence ID" value="ENSMUSP00000152190.2"/>
    <property type="gene ID" value="ENSMUSG00000021608.16"/>
</dbReference>
<dbReference type="GeneID" id="210992"/>
<dbReference type="KEGG" id="mmu:210992"/>
<dbReference type="UCSC" id="uc007rdk.1">
    <molecule id="Q3TFD2-1"/>
    <property type="organism name" value="mouse"/>
</dbReference>
<dbReference type="AGR" id="MGI:2384812"/>
<dbReference type="CTD" id="79888"/>
<dbReference type="MGI" id="MGI:2384812">
    <property type="gene designation" value="Lpcat1"/>
</dbReference>
<dbReference type="VEuPathDB" id="HostDB:ENSMUSG00000021608"/>
<dbReference type="eggNOG" id="KOG4666">
    <property type="taxonomic scope" value="Eukaryota"/>
</dbReference>
<dbReference type="GeneTree" id="ENSGT01030000234574"/>
<dbReference type="HOGENOM" id="CLU_025017_0_1_1"/>
<dbReference type="InParanoid" id="Q3TFD2"/>
<dbReference type="OMA" id="TEDDLAC"/>
<dbReference type="OrthoDB" id="272512at2759"/>
<dbReference type="PhylomeDB" id="Q3TFD2"/>
<dbReference type="TreeFam" id="TF323244"/>
<dbReference type="BRENDA" id="2.3.1.23">
    <property type="organism ID" value="3474"/>
</dbReference>
<dbReference type="BRENDA" id="2.3.1.51">
    <property type="organism ID" value="3474"/>
</dbReference>
<dbReference type="BRENDA" id="2.3.1.62">
    <property type="organism ID" value="3474"/>
</dbReference>
<dbReference type="BRENDA" id="2.3.1.67">
    <property type="organism ID" value="3474"/>
</dbReference>
<dbReference type="Reactome" id="R-MMU-1482788">
    <property type="pathway name" value="Acyl chain remodelling of PC"/>
</dbReference>
<dbReference type="Reactome" id="R-MMU-1482925">
    <property type="pathway name" value="Acyl chain remodelling of PG"/>
</dbReference>
<dbReference type="Reactome" id="R-MMU-1483166">
    <property type="pathway name" value="Synthesis of PA"/>
</dbReference>
<dbReference type="Reactome" id="R-MMU-1483191">
    <property type="pathway name" value="Synthesis of PC"/>
</dbReference>
<dbReference type="Reactome" id="R-MMU-6798695">
    <property type="pathway name" value="Neutrophil degranulation"/>
</dbReference>
<dbReference type="UniPathway" id="UPA00085"/>
<dbReference type="BioGRID-ORCS" id="210992">
    <property type="hits" value="5 hits in 82 CRISPR screens"/>
</dbReference>
<dbReference type="ChiTaRS" id="Lpcat1">
    <property type="organism name" value="mouse"/>
</dbReference>
<dbReference type="PRO" id="PR:Q3TFD2"/>
<dbReference type="Proteomes" id="UP000000589">
    <property type="component" value="Chromosome 13"/>
</dbReference>
<dbReference type="RNAct" id="Q3TFD2">
    <property type="molecule type" value="protein"/>
</dbReference>
<dbReference type="Bgee" id="ENSMUSG00000021608">
    <property type="expression patterns" value="Expressed in left lung and 263 other cell types or tissues"/>
</dbReference>
<dbReference type="ExpressionAtlas" id="Q3TFD2">
    <property type="expression patterns" value="baseline and differential"/>
</dbReference>
<dbReference type="GO" id="GO:0005783">
    <property type="term" value="C:endoplasmic reticulum"/>
    <property type="evidence" value="ECO:0000314"/>
    <property type="project" value="UniProtKB"/>
</dbReference>
<dbReference type="GO" id="GO:0005789">
    <property type="term" value="C:endoplasmic reticulum membrane"/>
    <property type="evidence" value="ECO:0007669"/>
    <property type="project" value="UniProtKB-SubCell"/>
</dbReference>
<dbReference type="GO" id="GO:0005794">
    <property type="term" value="C:Golgi apparatus"/>
    <property type="evidence" value="ECO:0000314"/>
    <property type="project" value="UniProtKB"/>
</dbReference>
<dbReference type="GO" id="GO:0000139">
    <property type="term" value="C:Golgi membrane"/>
    <property type="evidence" value="ECO:0007669"/>
    <property type="project" value="UniProtKB-SubCell"/>
</dbReference>
<dbReference type="GO" id="GO:0005811">
    <property type="term" value="C:lipid droplet"/>
    <property type="evidence" value="ECO:0007669"/>
    <property type="project" value="UniProtKB-SubCell"/>
</dbReference>
<dbReference type="GO" id="GO:0016020">
    <property type="term" value="C:membrane"/>
    <property type="evidence" value="ECO:0000314"/>
    <property type="project" value="UniProtKB"/>
</dbReference>
<dbReference type="GO" id="GO:0005886">
    <property type="term" value="C:plasma membrane"/>
    <property type="evidence" value="ECO:0007669"/>
    <property type="project" value="UniProtKB-SubCell"/>
</dbReference>
<dbReference type="GO" id="GO:0003841">
    <property type="term" value="F:1-acylglycerol-3-phosphate O-acyltransferase activity"/>
    <property type="evidence" value="ECO:0000250"/>
    <property type="project" value="UniProtKB"/>
</dbReference>
<dbReference type="GO" id="GO:0047184">
    <property type="term" value="F:1-acylglycerophosphocholine O-acyltransferase activity"/>
    <property type="evidence" value="ECO:0000314"/>
    <property type="project" value="UniProtKB"/>
</dbReference>
<dbReference type="GO" id="GO:0047192">
    <property type="term" value="F:1-alkylglycerophosphocholine O-acetyltransferase activity"/>
    <property type="evidence" value="ECO:0000314"/>
    <property type="project" value="UniProtKB"/>
</dbReference>
<dbReference type="GO" id="GO:0047191">
    <property type="term" value="F:1-alkylglycerophosphocholine O-acyltransferase activity"/>
    <property type="evidence" value="ECO:0000314"/>
    <property type="project" value="UniProtKB"/>
</dbReference>
<dbReference type="GO" id="GO:0005509">
    <property type="term" value="F:calcium ion binding"/>
    <property type="evidence" value="ECO:0007669"/>
    <property type="project" value="InterPro"/>
</dbReference>
<dbReference type="GO" id="GO:0047159">
    <property type="term" value="F:plasmalogen synthase activity"/>
    <property type="evidence" value="ECO:0000314"/>
    <property type="project" value="UniProtKB"/>
</dbReference>
<dbReference type="GO" id="GO:2001246">
    <property type="term" value="P:negative regulation of phosphatidylcholine biosynthetic process"/>
    <property type="evidence" value="ECO:0000314"/>
    <property type="project" value="MGI"/>
</dbReference>
<dbReference type="GO" id="GO:0036151">
    <property type="term" value="P:phosphatidylcholine acyl-chain remodeling"/>
    <property type="evidence" value="ECO:0007669"/>
    <property type="project" value="Ensembl"/>
</dbReference>
<dbReference type="GO" id="GO:0006656">
    <property type="term" value="P:phosphatidylcholine biosynthetic process"/>
    <property type="evidence" value="ECO:0000314"/>
    <property type="project" value="MGI"/>
</dbReference>
<dbReference type="GO" id="GO:0008654">
    <property type="term" value="P:phospholipid biosynthetic process"/>
    <property type="evidence" value="ECO:0000314"/>
    <property type="project" value="UniProtKB"/>
</dbReference>
<dbReference type="GO" id="GO:0045732">
    <property type="term" value="P:positive regulation of protein catabolic process"/>
    <property type="evidence" value="ECO:0000314"/>
    <property type="project" value="MGI"/>
</dbReference>
<dbReference type="GO" id="GO:0030163">
    <property type="term" value="P:protein catabolic process"/>
    <property type="evidence" value="ECO:0000314"/>
    <property type="project" value="MGI"/>
</dbReference>
<dbReference type="GO" id="GO:0060041">
    <property type="term" value="P:retina development in camera-type eye"/>
    <property type="evidence" value="ECO:0000315"/>
    <property type="project" value="MGI"/>
</dbReference>
<dbReference type="GO" id="GO:0043129">
    <property type="term" value="P:surfactant homeostasis"/>
    <property type="evidence" value="ECO:0000314"/>
    <property type="project" value="MGI"/>
</dbReference>
<dbReference type="CDD" id="cd07991">
    <property type="entry name" value="LPLAT_LPCAT1-like"/>
    <property type="match status" value="1"/>
</dbReference>
<dbReference type="FunFam" id="1.10.238.10:FF:000379">
    <property type="entry name" value="Lysophosphatidylcholine acyltransferase 1"/>
    <property type="match status" value="1"/>
</dbReference>
<dbReference type="Gene3D" id="1.10.238.10">
    <property type="entry name" value="EF-hand"/>
    <property type="match status" value="1"/>
</dbReference>
<dbReference type="InterPro" id="IPR011992">
    <property type="entry name" value="EF-hand-dom_pair"/>
</dbReference>
<dbReference type="InterPro" id="IPR018247">
    <property type="entry name" value="EF_Hand_1_Ca_BS"/>
</dbReference>
<dbReference type="InterPro" id="IPR002048">
    <property type="entry name" value="EF_hand_dom"/>
</dbReference>
<dbReference type="InterPro" id="IPR045252">
    <property type="entry name" value="LPCAT1-like"/>
</dbReference>
<dbReference type="InterPro" id="IPR002123">
    <property type="entry name" value="Plipid/glycerol_acylTrfase"/>
</dbReference>
<dbReference type="PANTHER" id="PTHR23063:SF57">
    <property type="entry name" value="LYSOPHOSPHATIDYLCHOLINE ACYLTRANSFERASE 1"/>
    <property type="match status" value="1"/>
</dbReference>
<dbReference type="PANTHER" id="PTHR23063">
    <property type="entry name" value="PHOSPHOLIPID ACYLTRANSFERASE"/>
    <property type="match status" value="1"/>
</dbReference>
<dbReference type="Pfam" id="PF01553">
    <property type="entry name" value="Acyltransferase"/>
    <property type="match status" value="1"/>
</dbReference>
<dbReference type="Pfam" id="PF13833">
    <property type="entry name" value="EF-hand_8"/>
    <property type="match status" value="1"/>
</dbReference>
<dbReference type="SMART" id="SM00054">
    <property type="entry name" value="EFh"/>
    <property type="match status" value="3"/>
</dbReference>
<dbReference type="SMART" id="SM00563">
    <property type="entry name" value="PlsC"/>
    <property type="match status" value="1"/>
</dbReference>
<dbReference type="SUPFAM" id="SSF47473">
    <property type="entry name" value="EF-hand"/>
    <property type="match status" value="1"/>
</dbReference>
<dbReference type="SUPFAM" id="SSF69593">
    <property type="entry name" value="Glycerol-3-phosphate (1)-acyltransferase"/>
    <property type="match status" value="1"/>
</dbReference>
<dbReference type="PROSITE" id="PS00018">
    <property type="entry name" value="EF_HAND_1"/>
    <property type="match status" value="1"/>
</dbReference>
<dbReference type="PROSITE" id="PS50222">
    <property type="entry name" value="EF_HAND_2"/>
    <property type="match status" value="2"/>
</dbReference>
<sequence length="534" mass="59744">MRLRGRGPRAAPSSSSGAGDARRLAPPGRNPFVHELRLSALQKAQVAFMTLTLFPIRLLFAAFMMLLAWPFALLASLGPPDKEPEQPLALWRKVVDFLLKAIMRTMWFAGGFHRVAVKGRQALPTEAAILTLAPHSSYFDAIPVTMTMSSIVMKAESRDIPIWGTLIRYIRPVFVSRSDQDSRRKTVEEIKRRAQSNGKWPQIMIFPEGTCTNRTCLITFKPGAFIPGVPVQPVVLRYPNKLDTITWTWQGPGALKILWLTLCQFQNQVEIEFLPVYCPSEEEKRNPALYASNVRRVMAKALGVSVTDYTFEDCQLALAEGQLRLPADTCLLEFARLVRGLGLKPENLEKDLDKYSESARMKRGEKIRLPEFAAYLEVPVSDALEDMFSLFDESGGGEIDLREYVVALSVVCRPSQTLATIQLAFKMYGSPEDGSIDEANLSCILKTALGVSELTVTDLFQAIDQEDKGRITFDDFCGFAEMYPDYAEDYLYPDQTHFDSCAQTPPAPTPNGFCIDFSPENSDFGRKNSCKKAD</sequence>
<protein>
    <recommendedName>
        <fullName>Lysophosphatidylcholine acyltransferase 1</fullName>
        <shortName>LPC acyltransferase 1</shortName>
        <shortName>LPCAT-1</shortName>
        <shortName>LysoPC acyltransferase 1</shortName>
        <shortName>mLPCAT1</shortName>
        <ecNumber evidence="6 8 9">2.3.1.23</ecNumber>
    </recommendedName>
    <alternativeName>
        <fullName>1-acylglycerol-3-phosphate O-acyltransferase</fullName>
        <ecNumber evidence="1">2.3.1.51</ecNumber>
    </alternativeName>
    <alternativeName>
        <fullName>1-acylglycerophosphocholine O-acyltransferase</fullName>
    </alternativeName>
    <alternativeName>
        <fullName>1-alkenylglycerophosphocholine O-acyltransferase</fullName>
        <ecNumber evidence="6 9">2.3.1.25</ecNumber>
    </alternativeName>
    <alternativeName>
        <fullName>1-alkylglycerophosphocholine O-acetyltransferase</fullName>
        <ecNumber evidence="9">2.3.1.67</ecNumber>
    </alternativeName>
    <alternativeName>
        <fullName>Acetyl-CoA:lyso-platelet-activating factor acetyltransferase</fullName>
        <shortName>Acetyl-CoA:lyso-PAF acetyltransferase</shortName>
        <shortName>Lyso-PAF acetyltransferase</shortName>
        <shortName>LysoPAFAT</shortName>
    </alternativeName>
    <alternativeName>
        <fullName>Acyltransferase-like 2</fullName>
    </alternativeName>
</protein>
<feature type="chain" id="PRO_0000247065" description="Lysophosphatidylcholine acyltransferase 1">
    <location>
        <begin position="1"/>
        <end position="534"/>
    </location>
</feature>
<feature type="topological domain" description="Cytoplasmic" evidence="3">
    <location>
        <begin position="1"/>
        <end position="57"/>
    </location>
</feature>
<feature type="transmembrane region" description="Helical; Signal-anchor for type II membrane protein" evidence="3">
    <location>
        <begin position="58"/>
        <end position="78"/>
    </location>
</feature>
<feature type="topological domain" description="Lumenal" evidence="3">
    <location>
        <begin position="79"/>
        <end position="534"/>
    </location>
</feature>
<feature type="domain" description="EF-hand 1" evidence="4">
    <location>
        <begin position="379"/>
        <end position="414"/>
    </location>
</feature>
<feature type="domain" description="EF-hand 2" evidence="4">
    <location>
        <begin position="451"/>
        <end position="486"/>
    </location>
</feature>
<feature type="region of interest" description="Disordered" evidence="5">
    <location>
        <begin position="1"/>
        <end position="25"/>
    </location>
</feature>
<feature type="short sequence motif" description="HXXXXD motif" evidence="9">
    <location>
        <begin position="135"/>
        <end position="140"/>
    </location>
</feature>
<feature type="short sequence motif" description="Di-lysine motif" evidence="13">
    <location>
        <begin position="531"/>
        <end position="534"/>
    </location>
</feature>
<feature type="compositionally biased region" description="Low complexity" evidence="5">
    <location>
        <begin position="8"/>
        <end position="19"/>
    </location>
</feature>
<feature type="binding site" evidence="4">
    <location>
        <position position="392"/>
    </location>
    <ligand>
        <name>Ca(2+)</name>
        <dbReference type="ChEBI" id="CHEBI:29108"/>
    </ligand>
</feature>
<feature type="binding site" evidence="4">
    <location>
        <position position="394"/>
    </location>
    <ligand>
        <name>Ca(2+)</name>
        <dbReference type="ChEBI" id="CHEBI:29108"/>
    </ligand>
</feature>
<feature type="binding site" evidence="4">
    <location>
        <position position="398"/>
    </location>
    <ligand>
        <name>Ca(2+)</name>
        <dbReference type="ChEBI" id="CHEBI:29108"/>
    </ligand>
</feature>
<feature type="binding site" evidence="4">
    <location>
        <position position="403"/>
    </location>
    <ligand>
        <name>Ca(2+)</name>
        <dbReference type="ChEBI" id="CHEBI:29108"/>
    </ligand>
</feature>
<feature type="splice variant" id="VSP_019913" description="In isoform 3." evidence="11">
    <location>
        <begin position="1"/>
        <end position="203"/>
    </location>
</feature>
<feature type="splice variant" id="VSP_019914" description="In isoform 2." evidence="10">
    <location>
        <begin position="1"/>
        <end position="48"/>
    </location>
</feature>
<feature type="mutagenesis site" description="Abolishes activity." evidence="9">
    <location>
        <begin position="135"/>
        <end position="140"/>
    </location>
</feature>
<feature type="mutagenesis site" description="Loss of activity." evidence="9">
    <original>H</original>
    <variation>A</variation>
    <location>
        <position position="135"/>
    </location>
</feature>
<feature type="mutagenesis site" description="Loss of activity." evidence="9">
    <original>D</original>
    <variation>A</variation>
    <location>
        <position position="140"/>
    </location>
</feature>
<feature type="mutagenesis site" description="No effect on activity for acetyl-CoA. Reduced activity for palmitoyl-CoA." evidence="9">
    <original>I</original>
    <variation>A</variation>
    <location>
        <position position="160"/>
    </location>
</feature>
<feature type="mutagenesis site" description="Greatly reduced activity." evidence="9">
    <original>I</original>
    <variation>A</variation>
    <location>
        <position position="162"/>
    </location>
</feature>
<feature type="mutagenesis site" description="Greatly reduced activity." evidence="9">
    <original>W</original>
    <variation>A</variation>
    <location>
        <position position="163"/>
    </location>
</feature>
<feature type="mutagenesis site" description="Abolishes activity." evidence="9">
    <location>
        <begin position="164"/>
        <end position="177"/>
    </location>
</feature>
<feature type="mutagenesis site" description="Slightly increased activity." evidence="9">
    <original>G</original>
    <variation>A</variation>
    <location>
        <position position="164"/>
    </location>
</feature>
<feature type="mutagenesis site" description="Greatly reduced activity." evidence="9">
    <original>L</original>
    <variation>A</variation>
    <location>
        <position position="166"/>
    </location>
</feature>
<feature type="mutagenesis site" description="Slightly reduced activity." evidence="9">
    <original>I</original>
    <variation>A</variation>
    <location>
        <position position="167"/>
    </location>
</feature>
<feature type="mutagenesis site" description="Reduced activity." evidence="9">
    <original>R</original>
    <variation>A</variation>
    <location>
        <position position="168"/>
    </location>
</feature>
<feature type="mutagenesis site" description="Slightly reduced activity." evidence="9">
    <original>Y</original>
    <variation>A</variation>
    <location>
        <position position="169"/>
    </location>
</feature>
<feature type="mutagenesis site" description="Slightly reduced activity." evidence="9">
    <original>I</original>
    <variation>A</variation>
    <location>
        <position position="170"/>
    </location>
</feature>
<feature type="mutagenesis site" description="Reduced activity." evidence="9">
    <original>R</original>
    <variation>A</variation>
    <location>
        <position position="171"/>
    </location>
</feature>
<feature type="mutagenesis site" description="Greatly reduced activity." evidence="9">
    <original>V</original>
    <variation>A</variation>
    <location>
        <position position="173"/>
    </location>
</feature>
<feature type="mutagenesis site" description="Loss of lyso-PAFAT activity. LPCAT activity is partially reduced." evidence="9">
    <original>F</original>
    <variation>A</variation>
    <location>
        <position position="174"/>
    </location>
</feature>
<feature type="mutagenesis site" description="No activity for acetyl-CoA. Activity for palmitoyl-CoA decreased." evidence="9">
    <original>V</original>
    <variation>A</variation>
    <location>
        <position position="175"/>
    </location>
</feature>
<feature type="mutagenesis site" description="Loss of lyso-PAFAT activity. LPCAT activity is partially reduced." evidence="9">
    <original>R</original>
    <variation>A</variation>
    <location>
        <position position="177"/>
    </location>
</feature>
<feature type="mutagenesis site" description="Abolishes activity." evidence="9">
    <location>
        <begin position="203"/>
        <end position="209"/>
    </location>
</feature>
<feature type="mutagenesis site" description="Loss of activity." evidence="9">
    <original>E</original>
    <variation>A</variation>
    <location>
        <position position="208"/>
    </location>
</feature>
<feature type="mutagenesis site" description="Reduced activity." evidence="9">
    <original>G</original>
    <variation>A</variation>
    <location>
        <position position="209"/>
    </location>
</feature>
<feature type="mutagenesis site" description="Abolishes activity." evidence="9">
    <location>
        <begin position="227"/>
        <end position="233"/>
    </location>
</feature>
<feature type="mutagenesis site" description="Reduced activity." evidence="9">
    <original>P</original>
    <variation>A</variation>
    <location>
        <position position="227"/>
    </location>
</feature>
<feature type="mutagenesis site" description="Reduced activity." evidence="9">
    <original>P</original>
    <variation>A</variation>
    <location>
        <position position="230"/>
    </location>
</feature>
<feature type="mutagenesis site" description="Reduced activity." evidence="9">
    <original>P</original>
    <variation>A</variation>
    <location>
        <position position="233"/>
    </location>
</feature>
<feature type="sequence conflict" description="In Ref. 3; BAC38353." evidence="12" ref="3">
    <original>A</original>
    <variation>T</variation>
    <location>
        <position position="25"/>
    </location>
</feature>
<feature type="sequence conflict" description="In Ref. 4; AAH66809." evidence="12" ref="4">
    <original>A</original>
    <variation>T</variation>
    <location>
        <position position="101"/>
    </location>
</feature>
<feature type="sequence conflict" description="In Ref. 3; BAE42540." evidence="12" ref="3">
    <original>Q</original>
    <variation>R</variation>
    <location>
        <position position="232"/>
    </location>
</feature>
<feature type="sequence conflict" description="In Ref. 4; AAH66809." evidence="12" ref="4">
    <original>E</original>
    <variation>G</variation>
    <location>
        <position position="272"/>
    </location>
</feature>
<feature type="sequence conflict" description="In Ref. 3; BAC32594/BAC32760." evidence="12" ref="3">
    <original>V</original>
    <variation>M</variation>
    <location>
        <position position="338"/>
    </location>
</feature>
<feature type="sequence conflict" description="In Ref. 4; AAH66809." evidence="12" ref="4">
    <original>S</original>
    <variation>P</variation>
    <location>
        <position position="442"/>
    </location>
</feature>
<organism>
    <name type="scientific">Mus musculus</name>
    <name type="common">Mouse</name>
    <dbReference type="NCBI Taxonomy" id="10090"/>
    <lineage>
        <taxon>Eukaryota</taxon>
        <taxon>Metazoa</taxon>
        <taxon>Chordata</taxon>
        <taxon>Craniata</taxon>
        <taxon>Vertebrata</taxon>
        <taxon>Euteleostomi</taxon>
        <taxon>Mammalia</taxon>
        <taxon>Eutheria</taxon>
        <taxon>Euarchontoglires</taxon>
        <taxon>Glires</taxon>
        <taxon>Rodentia</taxon>
        <taxon>Myomorpha</taxon>
        <taxon>Muroidea</taxon>
        <taxon>Muridae</taxon>
        <taxon>Murinae</taxon>
        <taxon>Mus</taxon>
        <taxon>Mus</taxon>
    </lineage>
</organism>
<proteinExistence type="evidence at protein level"/>
<keyword id="KW-0012">Acyltransferase</keyword>
<keyword id="KW-0025">Alternative splicing</keyword>
<keyword id="KW-0106">Calcium</keyword>
<keyword id="KW-1003">Cell membrane</keyword>
<keyword id="KW-0256">Endoplasmic reticulum</keyword>
<keyword id="KW-0333">Golgi apparatus</keyword>
<keyword id="KW-0444">Lipid biosynthesis</keyword>
<keyword id="KW-0551">Lipid droplet</keyword>
<keyword id="KW-0443">Lipid metabolism</keyword>
<keyword id="KW-0472">Membrane</keyword>
<keyword id="KW-0479">Metal-binding</keyword>
<keyword id="KW-0594">Phospholipid biosynthesis</keyword>
<keyword id="KW-1208">Phospholipid metabolism</keyword>
<keyword id="KW-1185">Reference proteome</keyword>
<keyword id="KW-0677">Repeat</keyword>
<keyword id="KW-0735">Signal-anchor</keyword>
<keyword id="KW-0808">Transferase</keyword>
<keyword id="KW-0812">Transmembrane</keyword>
<keyword id="KW-1133">Transmembrane helix</keyword>
<accession>Q3TFD2</accession>
<accession>Q3TAX4</accession>
<accession>Q6NXZ6</accession>
<accession>Q8BG23</accession>
<accession>Q8BUX7</accession>
<accession>Q99JU6</accession>
<name>PCAT1_MOUSE</name>